<proteinExistence type="evidence at protein level"/>
<accession>O21970</accession>
<reference key="1">
    <citation type="journal article" date="1998" name="Virology">
        <title>Accessory genes in the darA operon of bacteriophage P1 affect antirestriction function, generalized transduction, head morphogenesis, and host cell lysis.</title>
        <authorList>
            <person name="Iida S."/>
            <person name="Hiestand-Nauer R."/>
            <person name="Sandmeier H."/>
            <person name="Lehnherr H."/>
            <person name="Arber W."/>
        </authorList>
    </citation>
    <scope>NUCLEOTIDE SEQUENCE [GENOMIC DNA]</scope>
</reference>
<reference key="2">
    <citation type="journal article" date="2004" name="J. Bacteriol.">
        <title>Genome of bacteriophage P1.</title>
        <authorList>
            <person name="Lobocka M.B."/>
            <person name="Rose D.J."/>
            <person name="Plunkett G. III"/>
            <person name="Rusin M."/>
            <person name="Samojedny A."/>
            <person name="Lehnherr H."/>
            <person name="Yarmolinsky M.B."/>
            <person name="Blattner F.R."/>
        </authorList>
    </citation>
    <scope>NUCLEOTIDE SEQUENCE [GENOMIC DNA]</scope>
    <source>
        <strain>Mod1902::IS5 c1.100 rev dmt</strain>
        <strain>Mod749::IS5 c1.100 mutant</strain>
    </source>
</reference>
<reference key="3">
    <citation type="journal article" date="1987" name="Virology">
        <title>Two DNA antirestriction systems of bacteriophage P1, darA, and darB: characterization of darA- phages.</title>
        <authorList>
            <person name="Iida S."/>
            <person name="Streiff M.B."/>
            <person name="Bickle T.A."/>
            <person name="Arber W."/>
        </authorList>
    </citation>
    <scope>FUNCTION</scope>
    <scope>SUBCELLULAR LOCATION</scope>
</reference>
<reference key="4">
    <citation type="journal article" date="1987" name="Virology">
        <title>Expression and proteolytic processing of the darA antirestriction gene product of bacteriophage P1.</title>
        <authorList>
            <person name="Streiff M.B."/>
            <person name="Iida S."/>
            <person name="Bickle T.A."/>
        </authorList>
    </citation>
    <scope>INDUCTION</scope>
    <scope>PROTEOLYTIC CLEAVAGE</scope>
    <scope>SUBCELLULAR LOCATION</scope>
</reference>
<reference key="5">
    <citation type="journal article" date="2017" name="Mol. Microbiol.">
        <title>The multicomponent antirestriction system of phage P1 is linked to capsid morphogenesis.</title>
        <authorList>
            <person name="Piya D."/>
            <person name="Vara L."/>
            <person name="Russell W.K."/>
            <person name="Young R."/>
            <person name="Gill J.J."/>
        </authorList>
    </citation>
    <scope>FUNCTION</scope>
    <scope>SUBCELLULAR LOCATION</scope>
</reference>
<name>DARA_BPP1</name>
<protein>
    <recommendedName>
        <fullName evidence="6">Defense against restriction protein A</fullName>
        <shortName>DarA</shortName>
    </recommendedName>
</protein>
<sequence length="639" mass="69480">MEQFNINKGMTIKPGLDVLPPPVTDDEYRALMAGEDRYLMTESNTLEEIEATFFYDTPIHWCATDLLEAISSTRLQLHRTMQAFVRALNQKLNGTGISAGSDKTGDVAQSGARAIGGAEIGRARNVNGLPVLPAIIPLSDGQTISILFHSPTAENRITNSDTLVAFQFLLNKKDVTHTVAPMSGRDMTLAQVTMKLANLAEKNSAKFQRAQKKKKALVDEITQLQADSDQKEDAMSDLADQVAAVEGQKADLEQKINAVASEADSLYEENERLQGEIDRLNRTGGRDTIAPAGMTGGHSRALTDRLASIKNRMHMDGEATLSNGASMKQFIGDGEGYIQLTDPDGSVYMIKAKSIQGVDMADAIGKLFKAYKAGNVSEYLVQPEEHKPENVEPESAEDTGSSSPEPEVSVGAYRYALQMRPAAPGAIPEGNKAILPRPDEGDPYYEYARYGIATYDTPLSDQQMSEYDLKLLPREDSFDFLAKTLTNGPFGKYAQKALELATNSPDEFRVMLKTQFQKTFPNIAFPGGAGTEKMVQSMINALQAEVGEITQPEPAPAQPDETVSEADAEANKAIEYLNNVMDMQSTDMAEIRNARGNVREAIAALQTAGRFEENEELVNGAARHLADLLVAIQKAGVAA</sequence>
<organism>
    <name type="scientific">Escherichia phage P1</name>
    <name type="common">Bacteriophage P1</name>
    <dbReference type="NCBI Taxonomy" id="2886926"/>
    <lineage>
        <taxon>Viruses</taxon>
        <taxon>Duplodnaviria</taxon>
        <taxon>Heunggongvirae</taxon>
        <taxon>Uroviricota</taxon>
        <taxon>Caudoviricetes</taxon>
        <taxon>Punavirus</taxon>
        <taxon>Punavirus P1</taxon>
    </lineage>
</organism>
<keyword id="KW-0167">Capsid protein</keyword>
<keyword id="KW-0175">Coiled coil</keyword>
<keyword id="KW-0945">Host-virus interaction</keyword>
<keyword id="KW-1090">Inhibition of host innate immune response by virus</keyword>
<keyword id="KW-0426">Late protein</keyword>
<keyword id="KW-1185">Reference proteome</keyword>
<keyword id="KW-1258">Restriction-modification system evasion by virus</keyword>
<keyword id="KW-0118">Viral capsid assembly</keyword>
<keyword id="KW-0899">Viral immunoevasion</keyword>
<keyword id="KW-1188">Viral release from host cell</keyword>
<keyword id="KW-0946">Virion</keyword>
<organismHost>
    <name type="scientific">Enterobacteriaceae</name>
    <dbReference type="NCBI Taxonomy" id="543"/>
</organismHost>
<evidence type="ECO:0000255" key="1"/>
<evidence type="ECO:0000256" key="2">
    <source>
        <dbReference type="SAM" id="MobiDB-lite"/>
    </source>
</evidence>
<evidence type="ECO:0000269" key="3">
    <source>
    </source>
</evidence>
<evidence type="ECO:0000269" key="4">
    <source>
    </source>
</evidence>
<evidence type="ECO:0000269" key="5">
    <source>
    </source>
</evidence>
<evidence type="ECO:0000303" key="6">
    <source>
    </source>
</evidence>
<feature type="chain" id="PRO_0000433212" description="Defense against restriction protein A">
    <location>
        <begin position="1"/>
        <end position="639"/>
    </location>
</feature>
<feature type="region of interest" description="Disordered" evidence="2">
    <location>
        <begin position="382"/>
        <end position="407"/>
    </location>
</feature>
<feature type="coiled-coil region" evidence="1">
    <location>
        <begin position="201"/>
        <end position="284"/>
    </location>
</feature>
<dbReference type="EMBL" id="AJ000741">
    <property type="protein sequence ID" value="CAA04283.1"/>
    <property type="molecule type" value="Genomic_DNA"/>
</dbReference>
<dbReference type="EMBL" id="AF234172">
    <property type="protein sequence ID" value="AAQ13998.1"/>
    <property type="molecule type" value="Genomic_DNA"/>
</dbReference>
<dbReference type="EMBL" id="AF234173">
    <property type="protein sequence ID" value="AAQ14106.1"/>
    <property type="molecule type" value="Genomic_DNA"/>
</dbReference>
<dbReference type="RefSeq" id="YP_006494.1">
    <property type="nucleotide sequence ID" value="NC_005856.1"/>
</dbReference>
<dbReference type="SMR" id="O21970"/>
<dbReference type="GeneID" id="2777415"/>
<dbReference type="KEGG" id="vg:2777415"/>
<dbReference type="Proteomes" id="UP000001577">
    <property type="component" value="Segment"/>
</dbReference>
<dbReference type="Proteomes" id="UP000008091">
    <property type="component" value="Genome"/>
</dbReference>
<dbReference type="GO" id="GO:0019028">
    <property type="term" value="C:viral capsid"/>
    <property type="evidence" value="ECO:0007669"/>
    <property type="project" value="UniProtKB-KW"/>
</dbReference>
<dbReference type="GO" id="GO:0099018">
    <property type="term" value="P:symbiont-mediated evasion of host restriction-modification system"/>
    <property type="evidence" value="ECO:0000314"/>
    <property type="project" value="UniProtKB"/>
</dbReference>
<dbReference type="GO" id="GO:0052170">
    <property type="term" value="P:symbiont-mediated suppression of host innate immune response"/>
    <property type="evidence" value="ECO:0007669"/>
    <property type="project" value="UniProtKB-KW"/>
</dbReference>
<dbReference type="GO" id="GO:0019069">
    <property type="term" value="P:viral capsid assembly"/>
    <property type="evidence" value="ECO:0000314"/>
    <property type="project" value="UniProtKB"/>
</dbReference>
<dbReference type="Gene3D" id="1.10.287.1490">
    <property type="match status" value="1"/>
</dbReference>
<dbReference type="InterPro" id="IPR041501">
    <property type="entry name" value="DarA_C"/>
</dbReference>
<dbReference type="InterPro" id="IPR041140">
    <property type="entry name" value="DarA_N"/>
</dbReference>
<dbReference type="Pfam" id="PF18789">
    <property type="entry name" value="DarA_C"/>
    <property type="match status" value="1"/>
</dbReference>
<dbReference type="Pfam" id="PF18788">
    <property type="entry name" value="DarA_N"/>
    <property type="match status" value="1"/>
</dbReference>
<comment type="function">
    <text evidence="3 4">Internal capsid protein that is probably ejected along with the viral DNA and prevents degradation of viral DNA by the host type I restriction-modification antiviral defense system (PubMed:3029954). Plays a role in directing proper capsid assembly (PubMed:28509398).</text>
</comment>
<comment type="subcellular location">
    <subcellularLocation>
        <location evidence="3 5">Virion</location>
    </subcellularLocation>
    <text evidence="4">Internal capsid protein. A proteolytically cleaved 60 kDa form is incorporated into the virion.</text>
</comment>
<comment type="induction">
    <text evidence="5">Expressed late in the viral replication cycle.</text>
</comment>
<comment type="PTM">
    <text evidence="5">Proteolytically cleaved into a 60 kDa form which is incorporated into the virion.</text>
</comment>
<comment type="miscellaneous">
    <text evidence="3">Phage P1 Dar antirestriction system is composed of Hdf, DarA, DdrA, DdrB, DarB and Ulx. Hdf and DarA are incorporated first in the procapsid in a co-dependent manner, followed by DarB, DdrB and Ulx.</text>
</comment>
<gene>
    <name type="primary">darA</name>
</gene>